<name>ATPF_SPIOL</name>
<reference key="1">
    <citation type="journal article" date="1986" name="Mol. Gen. Genet.">
        <title>Chloroplast ATP synthase of spinach contains nine nonidentical subunit species, six of which are encoded by plastid chromosomes in two operons in a phylogenetically conserved arrangement.</title>
        <authorList>
            <person name="Hennig J."/>
            <person name="Herrmann R.G."/>
        </authorList>
    </citation>
    <scope>NUCLEOTIDE SEQUENCE [GENOMIC DNA]</scope>
</reference>
<reference key="2">
    <citation type="journal article" date="1987" name="J. Mol. Biol.">
        <title>A gene cluster in the spinach and pea chloroplast genomes encoding one CF1 and three CF0 subunits of the H+-ATP synthase complex and the ribosomal protein S2.</title>
        <authorList>
            <person name="Hudson G.S."/>
            <person name="Mason J.G."/>
            <person name="Holton T.A."/>
            <person name="Koller B."/>
            <person name="Cox G.B."/>
            <person name="Whitfeld P.R."/>
            <person name="Bottomley W."/>
        </authorList>
    </citation>
    <scope>NUCLEOTIDE SEQUENCE [GENOMIC DNA]</scope>
</reference>
<reference key="3">
    <citation type="journal article" date="2001" name="Plant Mol. Biol.">
        <title>The plastid chromosome of spinach (Spinacia oleracea): complete nucleotide sequence and gene organization.</title>
        <authorList>
            <person name="Schmitz-Linneweber C."/>
            <person name="Maier R.M."/>
            <person name="Alcaraz J.-P."/>
            <person name="Cottet A."/>
            <person name="Herrmann R.G."/>
            <person name="Mache R."/>
        </authorList>
    </citation>
    <scope>NUCLEOTIDE SEQUENCE [LARGE SCALE GENOMIC DNA]</scope>
    <source>
        <strain>cv. Geant d'hiver</strain>
        <strain>cv. Monatol</strain>
    </source>
</reference>
<dbReference type="EMBL" id="X03775">
    <property type="protein sequence ID" value="CAA27404.1"/>
    <property type="molecule type" value="Genomic_DNA"/>
</dbReference>
<dbReference type="EMBL" id="AJ400848">
    <property type="protein sequence ID" value="CAB88711.1"/>
    <property type="molecule type" value="Genomic_DNA"/>
</dbReference>
<dbReference type="PIR" id="S00583">
    <property type="entry name" value="PWSP1"/>
</dbReference>
<dbReference type="RefSeq" id="NP_054918.1">
    <property type="nucleotide sequence ID" value="NC_002202.1"/>
</dbReference>
<dbReference type="PDB" id="6FKF">
    <property type="method" value="EM"/>
    <property type="resolution" value="3.10 A"/>
    <property type="chains" value="b=1-184"/>
</dbReference>
<dbReference type="PDB" id="6FKH">
    <property type="method" value="EM"/>
    <property type="resolution" value="4.20 A"/>
    <property type="chains" value="b=1-184"/>
</dbReference>
<dbReference type="PDB" id="6FKI">
    <property type="method" value="EM"/>
    <property type="resolution" value="4.30 A"/>
    <property type="chains" value="b=1-184"/>
</dbReference>
<dbReference type="PDB" id="6VM1">
    <property type="method" value="EM"/>
    <property type="resolution" value="7.90 A"/>
    <property type="chains" value="I=1-184"/>
</dbReference>
<dbReference type="PDB" id="6VM4">
    <property type="method" value="EM"/>
    <property type="resolution" value="7.08 A"/>
    <property type="chains" value="I=1-184"/>
</dbReference>
<dbReference type="PDB" id="6VMB">
    <property type="method" value="EM"/>
    <property type="resolution" value="5.23 A"/>
    <property type="chains" value="I=1-184"/>
</dbReference>
<dbReference type="PDB" id="6VMG">
    <property type="method" value="EM"/>
    <property type="resolution" value="6.46 A"/>
    <property type="chains" value="I=1-184"/>
</dbReference>
<dbReference type="PDB" id="6VOF">
    <property type="method" value="EM"/>
    <property type="resolution" value="4.51 A"/>
    <property type="chains" value="I=1-184"/>
</dbReference>
<dbReference type="PDB" id="6VOH">
    <property type="method" value="EM"/>
    <property type="resolution" value="4.16 A"/>
    <property type="chains" value="I=1-184"/>
</dbReference>
<dbReference type="PDB" id="6VOJ">
    <property type="method" value="EM"/>
    <property type="resolution" value="4.34 A"/>
    <property type="chains" value="I=1-184"/>
</dbReference>
<dbReference type="PDB" id="6VOL">
    <property type="method" value="EM"/>
    <property type="resolution" value="4.06 A"/>
    <property type="chains" value="I=1-184"/>
</dbReference>
<dbReference type="PDB" id="6VON">
    <property type="method" value="EM"/>
    <property type="resolution" value="3.35 A"/>
    <property type="chains" value="I=1-184"/>
</dbReference>
<dbReference type="PDBsum" id="6FKF"/>
<dbReference type="PDBsum" id="6FKH"/>
<dbReference type="PDBsum" id="6FKI"/>
<dbReference type="PDBsum" id="6VM1"/>
<dbReference type="PDBsum" id="6VM4"/>
<dbReference type="PDBsum" id="6VMB"/>
<dbReference type="PDBsum" id="6VMG"/>
<dbReference type="PDBsum" id="6VOF"/>
<dbReference type="PDBsum" id="6VOH"/>
<dbReference type="PDBsum" id="6VOJ"/>
<dbReference type="PDBsum" id="6VOL"/>
<dbReference type="PDBsum" id="6VON"/>
<dbReference type="EMDB" id="EMD-21235"/>
<dbReference type="EMDB" id="EMD-21238"/>
<dbReference type="EMDB" id="EMD-21239"/>
<dbReference type="EMDB" id="EMD-21241"/>
<dbReference type="EMDB" id="EMD-21262"/>
<dbReference type="EMDB" id="EMD-21264"/>
<dbReference type="EMDB" id="EMD-21266"/>
<dbReference type="EMDB" id="EMD-21268"/>
<dbReference type="EMDB" id="EMD-21270"/>
<dbReference type="EMDB" id="EMD-4270"/>
<dbReference type="EMDB" id="EMD-4271"/>
<dbReference type="EMDB" id="EMD-4272"/>
<dbReference type="SASBDB" id="P06453"/>
<dbReference type="SMR" id="P06453"/>
<dbReference type="FunCoup" id="P06453">
    <property type="interactions" value="202"/>
</dbReference>
<dbReference type="IntAct" id="P06453">
    <property type="interactions" value="1"/>
</dbReference>
<dbReference type="STRING" id="3562.P06453"/>
<dbReference type="ChEMBL" id="CHEMBL2366567"/>
<dbReference type="GeneID" id="2715578"/>
<dbReference type="KEGG" id="soe:2715578"/>
<dbReference type="InParanoid" id="P06453"/>
<dbReference type="OrthoDB" id="1900203at2759"/>
<dbReference type="PRO" id="PR:P06453"/>
<dbReference type="Proteomes" id="UP001155700">
    <property type="component" value="Chloroplast Pltd"/>
</dbReference>
<dbReference type="GO" id="GO:0009535">
    <property type="term" value="C:chloroplast thylakoid membrane"/>
    <property type="evidence" value="ECO:0007669"/>
    <property type="project" value="UniProtKB-SubCell"/>
</dbReference>
<dbReference type="GO" id="GO:0045259">
    <property type="term" value="C:proton-transporting ATP synthase complex"/>
    <property type="evidence" value="ECO:0007669"/>
    <property type="project" value="UniProtKB-KW"/>
</dbReference>
<dbReference type="GO" id="GO:0005524">
    <property type="term" value="F:ATP binding"/>
    <property type="evidence" value="ECO:0007669"/>
    <property type="project" value="UniProtKB-KW"/>
</dbReference>
<dbReference type="GO" id="GO:0046933">
    <property type="term" value="F:proton-transporting ATP synthase activity, rotational mechanism"/>
    <property type="evidence" value="ECO:0007669"/>
    <property type="project" value="UniProtKB-UniRule"/>
</dbReference>
<dbReference type="CDD" id="cd06503">
    <property type="entry name" value="ATP-synt_Fo_b"/>
    <property type="match status" value="1"/>
</dbReference>
<dbReference type="HAMAP" id="MF_01398">
    <property type="entry name" value="ATP_synth_b_bprime"/>
    <property type="match status" value="1"/>
</dbReference>
<dbReference type="InterPro" id="IPR002146">
    <property type="entry name" value="ATP_synth_b/b'su_bac/chlpt"/>
</dbReference>
<dbReference type="PANTHER" id="PTHR34264">
    <property type="entry name" value="ATP SYNTHASE SUBUNIT B, CHLOROPLASTIC"/>
    <property type="match status" value="1"/>
</dbReference>
<dbReference type="PANTHER" id="PTHR34264:SF3">
    <property type="entry name" value="ATP SYNTHASE SUBUNIT B, CHLOROPLASTIC"/>
    <property type="match status" value="1"/>
</dbReference>
<dbReference type="Pfam" id="PF00430">
    <property type="entry name" value="ATP-synt_B"/>
    <property type="match status" value="1"/>
</dbReference>
<organism>
    <name type="scientific">Spinacia oleracea</name>
    <name type="common">Spinach</name>
    <dbReference type="NCBI Taxonomy" id="3562"/>
    <lineage>
        <taxon>Eukaryota</taxon>
        <taxon>Viridiplantae</taxon>
        <taxon>Streptophyta</taxon>
        <taxon>Embryophyta</taxon>
        <taxon>Tracheophyta</taxon>
        <taxon>Spermatophyta</taxon>
        <taxon>Magnoliopsida</taxon>
        <taxon>eudicotyledons</taxon>
        <taxon>Gunneridae</taxon>
        <taxon>Pentapetalae</taxon>
        <taxon>Caryophyllales</taxon>
        <taxon>Chenopodiaceae</taxon>
        <taxon>Chenopodioideae</taxon>
        <taxon>Anserineae</taxon>
        <taxon>Spinacia</taxon>
    </lineage>
</organism>
<feature type="chain" id="PRO_0000082423" description="ATP synthase subunit b, chloroplastic">
    <location>
        <begin position="1"/>
        <end position="184"/>
    </location>
</feature>
<feature type="transmembrane region" description="Helical" evidence="1">
    <location>
        <begin position="27"/>
        <end position="49"/>
    </location>
</feature>
<feature type="helix" evidence="2">
    <location>
        <begin position="31"/>
        <end position="156"/>
    </location>
</feature>
<feature type="helix" evidence="2">
    <location>
        <begin position="161"/>
        <end position="181"/>
    </location>
</feature>
<keyword id="KW-0002">3D-structure</keyword>
<keyword id="KW-0066">ATP synthesis</keyword>
<keyword id="KW-0067">ATP-binding</keyword>
<keyword id="KW-0138">CF(0)</keyword>
<keyword id="KW-0150">Chloroplast</keyword>
<keyword id="KW-0375">Hydrogen ion transport</keyword>
<keyword id="KW-0406">Ion transport</keyword>
<keyword id="KW-0472">Membrane</keyword>
<keyword id="KW-0547">Nucleotide-binding</keyword>
<keyword id="KW-0934">Plastid</keyword>
<keyword id="KW-1185">Reference proteome</keyword>
<keyword id="KW-0793">Thylakoid</keyword>
<keyword id="KW-0812">Transmembrane</keyword>
<keyword id="KW-1133">Transmembrane helix</keyword>
<keyword id="KW-0813">Transport</keyword>
<gene>
    <name evidence="1" type="primary">atpF</name>
</gene>
<accession>P06453</accession>
<sequence>MKNVTDSFVFLGHWPSAGSFGFNTDILATNLINLSVVLGVLIFFGKGVLSDLLDNRKQRILNTIRNSEELRGKAIEQLEKARARLKKVEMDADQFRVNGYSEIEREKMNLINSTYKTLEQFENYKNETIQFEQQKAINQVRQRVFQQALQGALGTLNSCLNNELHLRTINANIGMFGAMNEITD</sequence>
<comment type="function">
    <text evidence="1">F(1)F(0) ATP synthase produces ATP from ADP in the presence of a proton or sodium gradient. F-type ATPases consist of two structural domains, F(1) containing the extramembraneous catalytic core and F(0) containing the membrane proton channel, linked together by a central stalk and a peripheral stalk. During catalysis, ATP synthesis in the catalytic domain of F(1) is coupled via a rotary mechanism of the central stalk subunits to proton translocation.</text>
</comment>
<comment type="function">
    <text evidence="1">Component of the F(0) channel, it forms part of the peripheral stalk, linking F(1) to F(0).</text>
</comment>
<comment type="subunit">
    <text evidence="1">F-type ATPases have 2 components, F(1) - the catalytic core - and F(0) - the membrane proton channel. F(1) has five subunits: alpha(3), beta(3), gamma(1), delta(1), epsilon(1). F(0) has four main subunits: a(1), b(1), b'(1) and c(10-14). The alpha and beta chains form an alternating ring which encloses part of the gamma chain. F(1) is attached to F(0) by a central stalk formed by the gamma and epsilon chains, while a peripheral stalk is formed by the delta, b and b' chains.</text>
</comment>
<comment type="subcellular location">
    <subcellularLocation>
        <location evidence="1">Plastid</location>
        <location evidence="1">Chloroplast thylakoid membrane</location>
        <topology evidence="1">Single-pass membrane protein</topology>
    </subcellularLocation>
</comment>
<comment type="miscellaneous">
    <text>In plastids the F-type ATPase is also known as CF(1)CF(0).</text>
</comment>
<comment type="similarity">
    <text evidence="1">Belongs to the ATPase B chain family.</text>
</comment>
<evidence type="ECO:0000255" key="1">
    <source>
        <dbReference type="HAMAP-Rule" id="MF_01398"/>
    </source>
</evidence>
<evidence type="ECO:0007829" key="2">
    <source>
        <dbReference type="PDB" id="6FKF"/>
    </source>
</evidence>
<protein>
    <recommendedName>
        <fullName evidence="1">ATP synthase subunit b, chloroplastic</fullName>
    </recommendedName>
    <alternativeName>
        <fullName evidence="1">ATP synthase F(0) sector subunit b</fullName>
    </alternativeName>
    <alternativeName>
        <fullName evidence="1">ATPase subunit I</fullName>
    </alternativeName>
</protein>
<proteinExistence type="evidence at protein level"/>
<geneLocation type="chloroplast"/>